<gene>
    <name evidence="1" type="primary">nuoH</name>
    <name type="ordered locus">Fphi_0936</name>
</gene>
<dbReference type="EC" id="7.1.1.-" evidence="1"/>
<dbReference type="EMBL" id="CP000937">
    <property type="protein sequence ID" value="ABZ87159.1"/>
    <property type="molecule type" value="Genomic_DNA"/>
</dbReference>
<dbReference type="SMR" id="B0TWQ1"/>
<dbReference type="KEGG" id="fph:Fphi_0936"/>
<dbReference type="eggNOG" id="COG1005">
    <property type="taxonomic scope" value="Bacteria"/>
</dbReference>
<dbReference type="HOGENOM" id="CLU_015134_0_1_6"/>
<dbReference type="GO" id="GO:0005886">
    <property type="term" value="C:plasma membrane"/>
    <property type="evidence" value="ECO:0007669"/>
    <property type="project" value="UniProtKB-SubCell"/>
</dbReference>
<dbReference type="GO" id="GO:0003954">
    <property type="term" value="F:NADH dehydrogenase activity"/>
    <property type="evidence" value="ECO:0007669"/>
    <property type="project" value="TreeGrafter"/>
</dbReference>
<dbReference type="GO" id="GO:0016655">
    <property type="term" value="F:oxidoreductase activity, acting on NAD(P)H, quinone or similar compound as acceptor"/>
    <property type="evidence" value="ECO:0007669"/>
    <property type="project" value="UniProtKB-UniRule"/>
</dbReference>
<dbReference type="GO" id="GO:0048038">
    <property type="term" value="F:quinone binding"/>
    <property type="evidence" value="ECO:0007669"/>
    <property type="project" value="UniProtKB-KW"/>
</dbReference>
<dbReference type="GO" id="GO:0009060">
    <property type="term" value="P:aerobic respiration"/>
    <property type="evidence" value="ECO:0007669"/>
    <property type="project" value="TreeGrafter"/>
</dbReference>
<dbReference type="HAMAP" id="MF_01350">
    <property type="entry name" value="NDH1_NuoH"/>
    <property type="match status" value="1"/>
</dbReference>
<dbReference type="InterPro" id="IPR001694">
    <property type="entry name" value="NADH_UbQ_OxRdtase_su1/FPO"/>
</dbReference>
<dbReference type="InterPro" id="IPR018086">
    <property type="entry name" value="NADH_UbQ_OxRdtase_su1_CS"/>
</dbReference>
<dbReference type="NCBIfam" id="NF004741">
    <property type="entry name" value="PRK06076.1-2"/>
    <property type="match status" value="1"/>
</dbReference>
<dbReference type="PANTHER" id="PTHR11432">
    <property type="entry name" value="NADH DEHYDROGENASE SUBUNIT 1"/>
    <property type="match status" value="1"/>
</dbReference>
<dbReference type="PANTHER" id="PTHR11432:SF3">
    <property type="entry name" value="NADH-UBIQUINONE OXIDOREDUCTASE CHAIN 1"/>
    <property type="match status" value="1"/>
</dbReference>
<dbReference type="Pfam" id="PF00146">
    <property type="entry name" value="NADHdh"/>
    <property type="match status" value="1"/>
</dbReference>
<dbReference type="PROSITE" id="PS00667">
    <property type="entry name" value="COMPLEX1_ND1_1"/>
    <property type="match status" value="1"/>
</dbReference>
<dbReference type="PROSITE" id="PS00668">
    <property type="entry name" value="COMPLEX1_ND1_2"/>
    <property type="match status" value="1"/>
</dbReference>
<organism>
    <name type="scientific">Francisella philomiragia subsp. philomiragia (strain ATCC 25017 / CCUG 19701 / FSC 153 / O#319-036)</name>
    <dbReference type="NCBI Taxonomy" id="484022"/>
    <lineage>
        <taxon>Bacteria</taxon>
        <taxon>Pseudomonadati</taxon>
        <taxon>Pseudomonadota</taxon>
        <taxon>Gammaproteobacteria</taxon>
        <taxon>Thiotrichales</taxon>
        <taxon>Francisellaceae</taxon>
        <taxon>Francisella</taxon>
    </lineage>
</organism>
<proteinExistence type="inferred from homology"/>
<protein>
    <recommendedName>
        <fullName evidence="1">NADH-quinone oxidoreductase subunit H</fullName>
        <ecNumber evidence="1">7.1.1.-</ecNumber>
    </recommendedName>
    <alternativeName>
        <fullName evidence="1">NADH dehydrogenase I subunit H</fullName>
    </alternativeName>
    <alternativeName>
        <fullName evidence="1">NDH-1 subunit H</fullName>
    </alternativeName>
</protein>
<feature type="chain" id="PRO_1000086942" description="NADH-quinone oxidoreductase subunit H">
    <location>
        <begin position="1"/>
        <end position="336"/>
    </location>
</feature>
<feature type="transmembrane region" description="Helical" evidence="1">
    <location>
        <begin position="4"/>
        <end position="24"/>
    </location>
</feature>
<feature type="transmembrane region" description="Helical" evidence="1">
    <location>
        <begin position="75"/>
        <end position="95"/>
    </location>
</feature>
<feature type="transmembrane region" description="Helical" evidence="1">
    <location>
        <begin position="108"/>
        <end position="128"/>
    </location>
</feature>
<feature type="transmembrane region" description="Helical" evidence="1">
    <location>
        <begin position="154"/>
        <end position="174"/>
    </location>
</feature>
<feature type="transmembrane region" description="Helical" evidence="1">
    <location>
        <begin position="181"/>
        <end position="201"/>
    </location>
</feature>
<feature type="transmembrane region" description="Helical" evidence="1">
    <location>
        <begin position="233"/>
        <end position="253"/>
    </location>
</feature>
<feature type="transmembrane region" description="Helical" evidence="1">
    <location>
        <begin position="272"/>
        <end position="292"/>
    </location>
</feature>
<feature type="transmembrane region" description="Helical" evidence="1">
    <location>
        <begin position="308"/>
        <end position="328"/>
    </location>
</feature>
<keyword id="KW-0997">Cell inner membrane</keyword>
<keyword id="KW-1003">Cell membrane</keyword>
<keyword id="KW-0472">Membrane</keyword>
<keyword id="KW-0520">NAD</keyword>
<keyword id="KW-0874">Quinone</keyword>
<keyword id="KW-1278">Translocase</keyword>
<keyword id="KW-0812">Transmembrane</keyword>
<keyword id="KW-1133">Transmembrane helix</keyword>
<keyword id="KW-0830">Ubiquinone</keyword>
<sequence>MLEYILWTALYVLLIVIPLILVVAYYTYAERKVIGYMQDRIGPNRVGSFGLLQPIFDALKLFLKEIIVPTNSNRYLFFIAPILAFAPAYAAWAVIPFSKGVVLSDMNLGLLYILAMTSFSVYGIVIAGWASNSKYSLFGALRAGAQVVSYELAMGFAIVGVVIAAGSMGITGIIESQAGGLWHWYFIPLFPLFVVYFIAGIAETNRAPFDVVEGESEIIAGHHIEYTGSRFALFFLAEYANMILISILTSIMFLGGWCSPFEATPLEAVFNFVPGVVWLFAKTGIFMFMFLWVRATFPRYRYDQIMRLGWKIFIPLTFVWVVVVACMVRFGVGPWW</sequence>
<name>NUOH_FRAP2</name>
<comment type="function">
    <text evidence="1">NDH-1 shuttles electrons from NADH, via FMN and iron-sulfur (Fe-S) centers, to quinones in the respiratory chain. The immediate electron acceptor for the enzyme in this species is believed to be ubiquinone. Couples the redox reaction to proton translocation (for every two electrons transferred, four hydrogen ions are translocated across the cytoplasmic membrane), and thus conserves the redox energy in a proton gradient. This subunit may bind ubiquinone.</text>
</comment>
<comment type="catalytic activity">
    <reaction evidence="1">
        <text>a quinone + NADH + 5 H(+)(in) = a quinol + NAD(+) + 4 H(+)(out)</text>
        <dbReference type="Rhea" id="RHEA:57888"/>
        <dbReference type="ChEBI" id="CHEBI:15378"/>
        <dbReference type="ChEBI" id="CHEBI:24646"/>
        <dbReference type="ChEBI" id="CHEBI:57540"/>
        <dbReference type="ChEBI" id="CHEBI:57945"/>
        <dbReference type="ChEBI" id="CHEBI:132124"/>
    </reaction>
</comment>
<comment type="subunit">
    <text evidence="1">NDH-1 is composed of 14 different subunits. Subunits NuoA, H, J, K, L, M, N constitute the membrane sector of the complex.</text>
</comment>
<comment type="subcellular location">
    <subcellularLocation>
        <location evidence="1">Cell inner membrane</location>
        <topology evidence="1">Multi-pass membrane protein</topology>
    </subcellularLocation>
</comment>
<comment type="similarity">
    <text evidence="1">Belongs to the complex I subunit 1 family.</text>
</comment>
<accession>B0TWQ1</accession>
<evidence type="ECO:0000255" key="1">
    <source>
        <dbReference type="HAMAP-Rule" id="MF_01350"/>
    </source>
</evidence>
<reference key="1">
    <citation type="submission" date="2007-12" db="EMBL/GenBank/DDBJ databases">
        <title>Complete sequence of chromosome of Francisella philomiragia subsp. philomiragia ATCC 25017.</title>
        <authorList>
            <consortium name="US DOE Joint Genome Institute"/>
            <person name="Copeland A."/>
            <person name="Lucas S."/>
            <person name="Lapidus A."/>
            <person name="Barry K."/>
            <person name="Detter J.C."/>
            <person name="Glavina del Rio T."/>
            <person name="Hammon N."/>
            <person name="Israni S."/>
            <person name="Dalin E."/>
            <person name="Tice H."/>
            <person name="Pitluck S."/>
            <person name="Chain P."/>
            <person name="Malfatti S."/>
            <person name="Shin M."/>
            <person name="Vergez L."/>
            <person name="Schmutz J."/>
            <person name="Larimer F."/>
            <person name="Land M."/>
            <person name="Hauser L."/>
            <person name="Richardson P."/>
        </authorList>
    </citation>
    <scope>NUCLEOTIDE SEQUENCE [LARGE SCALE GENOMIC DNA]</scope>
    <source>
        <strain>ATCC 25017 / CCUG 19701 / FSC 153 / O#319-036</strain>
    </source>
</reference>